<organism>
    <name type="scientific">Thermoanaerobacter pseudethanolicus (strain ATCC 33223 / 39E)</name>
    <name type="common">Clostridium thermohydrosulfuricum</name>
    <dbReference type="NCBI Taxonomy" id="340099"/>
    <lineage>
        <taxon>Bacteria</taxon>
        <taxon>Bacillati</taxon>
        <taxon>Bacillota</taxon>
        <taxon>Clostridia</taxon>
        <taxon>Thermoanaerobacterales</taxon>
        <taxon>Thermoanaerobacteraceae</taxon>
        <taxon>Thermoanaerobacter</taxon>
    </lineage>
</organism>
<name>DEOC_THEP3</name>
<accession>B0KA53</accession>
<feature type="chain" id="PRO_1000094862" description="Deoxyribose-phosphate aldolase">
    <location>
        <begin position="1"/>
        <end position="223"/>
    </location>
</feature>
<feature type="active site" description="Proton donor/acceptor" evidence="1">
    <location>
        <position position="89"/>
    </location>
</feature>
<feature type="active site" description="Schiff-base intermediate with acetaldehyde" evidence="1">
    <location>
        <position position="154"/>
    </location>
</feature>
<feature type="active site" description="Proton donor/acceptor" evidence="1">
    <location>
        <position position="183"/>
    </location>
</feature>
<sequence>MNIAKMIDHTLLKPNATKSEIEKLCNEAKEYGFASVCINPCFVDLAYSMLKDTDVKVCTVIGFPLGANTIESKVFEAVDAVKRGATEVDMVLNVSMLKSGDYDYVKKEIEEVVKAVKSYGDIVVKVILETCYLTDEEKVKACQLTREAGADFVKTSTGFGPGGATVEDVKLMRQTVGENFGVKASGCVRTAEDAKAMIEAGANRIGASAGVKIAEEWNKLKMS</sequence>
<gene>
    <name evidence="1" type="primary">deoC</name>
    <name type="ordered locus">Teth39_1364</name>
</gene>
<protein>
    <recommendedName>
        <fullName evidence="1">Deoxyribose-phosphate aldolase</fullName>
        <shortName evidence="1">DERA</shortName>
        <ecNumber evidence="1">4.1.2.4</ecNumber>
    </recommendedName>
    <alternativeName>
        <fullName evidence="1">2-deoxy-D-ribose 5-phosphate aldolase</fullName>
    </alternativeName>
    <alternativeName>
        <fullName evidence="1">Phosphodeoxyriboaldolase</fullName>
        <shortName evidence="1">Deoxyriboaldolase</shortName>
    </alternativeName>
</protein>
<dbReference type="EC" id="4.1.2.4" evidence="1"/>
<dbReference type="EMBL" id="CP000924">
    <property type="protein sequence ID" value="ABY95016.1"/>
    <property type="molecule type" value="Genomic_DNA"/>
</dbReference>
<dbReference type="RefSeq" id="WP_003867914.1">
    <property type="nucleotide sequence ID" value="NC_010321.1"/>
</dbReference>
<dbReference type="SMR" id="B0KA53"/>
<dbReference type="STRING" id="340099.Teth39_1364"/>
<dbReference type="KEGG" id="tpd:Teth39_1364"/>
<dbReference type="eggNOG" id="COG0274">
    <property type="taxonomic scope" value="Bacteria"/>
</dbReference>
<dbReference type="HOGENOM" id="CLU_053595_0_1_9"/>
<dbReference type="UniPathway" id="UPA00002">
    <property type="reaction ID" value="UER00468"/>
</dbReference>
<dbReference type="Proteomes" id="UP000002156">
    <property type="component" value="Chromosome"/>
</dbReference>
<dbReference type="GO" id="GO:0005737">
    <property type="term" value="C:cytoplasm"/>
    <property type="evidence" value="ECO:0007669"/>
    <property type="project" value="UniProtKB-SubCell"/>
</dbReference>
<dbReference type="GO" id="GO:0004139">
    <property type="term" value="F:deoxyribose-phosphate aldolase activity"/>
    <property type="evidence" value="ECO:0007669"/>
    <property type="project" value="UniProtKB-UniRule"/>
</dbReference>
<dbReference type="GO" id="GO:0006018">
    <property type="term" value="P:2-deoxyribose 1-phosphate catabolic process"/>
    <property type="evidence" value="ECO:0007669"/>
    <property type="project" value="UniProtKB-UniRule"/>
</dbReference>
<dbReference type="GO" id="GO:0016052">
    <property type="term" value="P:carbohydrate catabolic process"/>
    <property type="evidence" value="ECO:0007669"/>
    <property type="project" value="TreeGrafter"/>
</dbReference>
<dbReference type="GO" id="GO:0009264">
    <property type="term" value="P:deoxyribonucleotide catabolic process"/>
    <property type="evidence" value="ECO:0007669"/>
    <property type="project" value="InterPro"/>
</dbReference>
<dbReference type="CDD" id="cd00959">
    <property type="entry name" value="DeoC"/>
    <property type="match status" value="1"/>
</dbReference>
<dbReference type="FunFam" id="3.20.20.70:FF:000044">
    <property type="entry name" value="Deoxyribose-phosphate aldolase"/>
    <property type="match status" value="1"/>
</dbReference>
<dbReference type="Gene3D" id="3.20.20.70">
    <property type="entry name" value="Aldolase class I"/>
    <property type="match status" value="1"/>
</dbReference>
<dbReference type="HAMAP" id="MF_00114">
    <property type="entry name" value="DeoC_type1"/>
    <property type="match status" value="1"/>
</dbReference>
<dbReference type="InterPro" id="IPR013785">
    <property type="entry name" value="Aldolase_TIM"/>
</dbReference>
<dbReference type="InterPro" id="IPR011343">
    <property type="entry name" value="DeoC"/>
</dbReference>
<dbReference type="InterPro" id="IPR002915">
    <property type="entry name" value="DeoC/FbaB/LacD_aldolase"/>
</dbReference>
<dbReference type="InterPro" id="IPR028581">
    <property type="entry name" value="DeoC_typeI"/>
</dbReference>
<dbReference type="NCBIfam" id="TIGR00126">
    <property type="entry name" value="deoC"/>
    <property type="match status" value="1"/>
</dbReference>
<dbReference type="PANTHER" id="PTHR10889">
    <property type="entry name" value="DEOXYRIBOSE-PHOSPHATE ALDOLASE"/>
    <property type="match status" value="1"/>
</dbReference>
<dbReference type="PANTHER" id="PTHR10889:SF1">
    <property type="entry name" value="DEOXYRIBOSE-PHOSPHATE ALDOLASE"/>
    <property type="match status" value="1"/>
</dbReference>
<dbReference type="Pfam" id="PF01791">
    <property type="entry name" value="DeoC"/>
    <property type="match status" value="1"/>
</dbReference>
<dbReference type="PIRSF" id="PIRSF001357">
    <property type="entry name" value="DeoC"/>
    <property type="match status" value="1"/>
</dbReference>
<dbReference type="SMART" id="SM01133">
    <property type="entry name" value="DeoC"/>
    <property type="match status" value="1"/>
</dbReference>
<dbReference type="SUPFAM" id="SSF51569">
    <property type="entry name" value="Aldolase"/>
    <property type="match status" value="1"/>
</dbReference>
<proteinExistence type="inferred from homology"/>
<evidence type="ECO:0000255" key="1">
    <source>
        <dbReference type="HAMAP-Rule" id="MF_00114"/>
    </source>
</evidence>
<reference key="1">
    <citation type="submission" date="2008-01" db="EMBL/GenBank/DDBJ databases">
        <title>Complete sequence of Thermoanaerobacter pseudethanolicus 39E.</title>
        <authorList>
            <person name="Copeland A."/>
            <person name="Lucas S."/>
            <person name="Lapidus A."/>
            <person name="Barry K."/>
            <person name="Glavina del Rio T."/>
            <person name="Dalin E."/>
            <person name="Tice H."/>
            <person name="Pitluck S."/>
            <person name="Bruce D."/>
            <person name="Goodwin L."/>
            <person name="Saunders E."/>
            <person name="Brettin T."/>
            <person name="Detter J.C."/>
            <person name="Han C."/>
            <person name="Schmutz J."/>
            <person name="Larimer F."/>
            <person name="Land M."/>
            <person name="Hauser L."/>
            <person name="Kyrpides N."/>
            <person name="Lykidis A."/>
            <person name="Hemme C."/>
            <person name="Fields M.W."/>
            <person name="He Z."/>
            <person name="Zhou J."/>
            <person name="Richardson P."/>
        </authorList>
    </citation>
    <scope>NUCLEOTIDE SEQUENCE [LARGE SCALE GENOMIC DNA]</scope>
    <source>
        <strain>ATCC 33223 / DSM 2355 / 39E</strain>
    </source>
</reference>
<comment type="function">
    <text evidence="1">Catalyzes a reversible aldol reaction between acetaldehyde and D-glyceraldehyde 3-phosphate to generate 2-deoxy-D-ribose 5-phosphate.</text>
</comment>
<comment type="catalytic activity">
    <reaction evidence="1">
        <text>2-deoxy-D-ribose 5-phosphate = D-glyceraldehyde 3-phosphate + acetaldehyde</text>
        <dbReference type="Rhea" id="RHEA:12821"/>
        <dbReference type="ChEBI" id="CHEBI:15343"/>
        <dbReference type="ChEBI" id="CHEBI:59776"/>
        <dbReference type="ChEBI" id="CHEBI:62877"/>
        <dbReference type="EC" id="4.1.2.4"/>
    </reaction>
</comment>
<comment type="pathway">
    <text evidence="1">Carbohydrate degradation; 2-deoxy-D-ribose 1-phosphate degradation; D-glyceraldehyde 3-phosphate and acetaldehyde from 2-deoxy-alpha-D-ribose 1-phosphate: step 2/2.</text>
</comment>
<comment type="subcellular location">
    <subcellularLocation>
        <location evidence="1">Cytoplasm</location>
    </subcellularLocation>
</comment>
<comment type="similarity">
    <text evidence="1">Belongs to the DeoC/FbaB aldolase family. DeoC type 1 subfamily.</text>
</comment>
<keyword id="KW-0963">Cytoplasm</keyword>
<keyword id="KW-0456">Lyase</keyword>
<keyword id="KW-1185">Reference proteome</keyword>
<keyword id="KW-0704">Schiff base</keyword>